<accession>Q73QV3</accession>
<organism>
    <name type="scientific">Treponema denticola (strain ATCC 35405 / DSM 14222 / CIP 103919 / JCM 8153 / KCTC 15104)</name>
    <dbReference type="NCBI Taxonomy" id="243275"/>
    <lineage>
        <taxon>Bacteria</taxon>
        <taxon>Pseudomonadati</taxon>
        <taxon>Spirochaetota</taxon>
        <taxon>Spirochaetia</taxon>
        <taxon>Spirochaetales</taxon>
        <taxon>Treponemataceae</taxon>
        <taxon>Treponema</taxon>
    </lineage>
</organism>
<dbReference type="EC" id="4.1.2.13" evidence="1"/>
<dbReference type="EMBL" id="AE017226">
    <property type="protein sequence ID" value="AAS10835.1"/>
    <property type="molecule type" value="Genomic_DNA"/>
</dbReference>
<dbReference type="RefSeq" id="NP_970954.1">
    <property type="nucleotide sequence ID" value="NC_002967.9"/>
</dbReference>
<dbReference type="RefSeq" id="WP_002681313.1">
    <property type="nucleotide sequence ID" value="NC_002967.9"/>
</dbReference>
<dbReference type="SMR" id="Q73QV3"/>
<dbReference type="STRING" id="243275.TDE_0340"/>
<dbReference type="PaxDb" id="243275-TDE_0340"/>
<dbReference type="GeneID" id="2739339"/>
<dbReference type="KEGG" id="tde:TDE_0340"/>
<dbReference type="PATRIC" id="fig|243275.7.peg.329"/>
<dbReference type="eggNOG" id="COG3588">
    <property type="taxonomic scope" value="Bacteria"/>
</dbReference>
<dbReference type="HOGENOM" id="CLU_081560_0_0_12"/>
<dbReference type="OrthoDB" id="9813469at2"/>
<dbReference type="UniPathway" id="UPA00109">
    <property type="reaction ID" value="UER00183"/>
</dbReference>
<dbReference type="Proteomes" id="UP000008212">
    <property type="component" value="Chromosome"/>
</dbReference>
<dbReference type="GO" id="GO:0004332">
    <property type="term" value="F:fructose-bisphosphate aldolase activity"/>
    <property type="evidence" value="ECO:0007669"/>
    <property type="project" value="UniProtKB-UniRule"/>
</dbReference>
<dbReference type="GO" id="GO:0006096">
    <property type="term" value="P:glycolytic process"/>
    <property type="evidence" value="ECO:0007669"/>
    <property type="project" value="UniProtKB-UniRule"/>
</dbReference>
<dbReference type="CDD" id="cd00949">
    <property type="entry name" value="FBP_aldolase_I_bact"/>
    <property type="match status" value="1"/>
</dbReference>
<dbReference type="Gene3D" id="3.20.20.70">
    <property type="entry name" value="Aldolase class I"/>
    <property type="match status" value="1"/>
</dbReference>
<dbReference type="HAMAP" id="MF_00729">
    <property type="entry name" value="FBP_aldolase_1"/>
    <property type="match status" value="1"/>
</dbReference>
<dbReference type="InterPro" id="IPR013785">
    <property type="entry name" value="Aldolase_TIM"/>
</dbReference>
<dbReference type="InterPro" id="IPR000741">
    <property type="entry name" value="FBA_I"/>
</dbReference>
<dbReference type="InterPro" id="IPR023014">
    <property type="entry name" value="FBA_I_Gram+-type"/>
</dbReference>
<dbReference type="NCBIfam" id="NF003784">
    <property type="entry name" value="PRK05377.1"/>
    <property type="match status" value="1"/>
</dbReference>
<dbReference type="PANTHER" id="PTHR11627">
    <property type="entry name" value="FRUCTOSE-BISPHOSPHATE ALDOLASE"/>
    <property type="match status" value="1"/>
</dbReference>
<dbReference type="Pfam" id="PF00274">
    <property type="entry name" value="Glycolytic"/>
    <property type="match status" value="1"/>
</dbReference>
<dbReference type="SUPFAM" id="SSF51569">
    <property type="entry name" value="Aldolase"/>
    <property type="match status" value="1"/>
</dbReference>
<gene>
    <name evidence="1" type="primary">fda</name>
    <name type="ordered locus">TDE_0340</name>
</gene>
<keyword id="KW-0324">Glycolysis</keyword>
<keyword id="KW-0456">Lyase</keyword>
<keyword id="KW-1185">Reference proteome</keyword>
<keyword id="KW-0704">Schiff base</keyword>
<feature type="chain" id="PRO_0000216914" description="Fructose-bisphosphate aldolase class 1">
    <location>
        <begin position="1"/>
        <end position="295"/>
    </location>
</feature>
<feature type="active site" description="Proton acceptor" evidence="1">
    <location>
        <position position="176"/>
    </location>
</feature>
<feature type="active site" description="Schiff-base intermediate with dihydroxyacetone-P" evidence="1">
    <location>
        <position position="213"/>
    </location>
</feature>
<sequence>MDKVKLERMKNDKGFIAALDQSGGSTPKALAAYGVPETAYSNEKEMFDLVHAMRTRIITGKAFNSNNILGAILFEQTMEREIEGMPTADFLWEKKKILPFLKVDKGLADLKDGVQLMKPIPNLDAMLKHAVEKHIFGTKMRSVIKEANPKGIKAVVDQQFELGIQIAKAGLVPIIEPEVDIKSPDKAKCEEILKKELEEHLKTLPKDLLVMFKLSIPTKENLYEEFTKHPQVVRVVALSGGYSRDDANKLLAKNRGMIASFSRALAEGLFASQSDAEFNATLEKTIKGVYEASIT</sequence>
<reference key="1">
    <citation type="journal article" date="2004" name="Proc. Natl. Acad. Sci. U.S.A.">
        <title>Comparison of the genome of the oral pathogen Treponema denticola with other spirochete genomes.</title>
        <authorList>
            <person name="Seshadri R."/>
            <person name="Myers G.S.A."/>
            <person name="Tettelin H."/>
            <person name="Eisen J.A."/>
            <person name="Heidelberg J.F."/>
            <person name="Dodson R.J."/>
            <person name="Davidsen T.M."/>
            <person name="DeBoy R.T."/>
            <person name="Fouts D.E."/>
            <person name="Haft D.H."/>
            <person name="Selengut J."/>
            <person name="Ren Q."/>
            <person name="Brinkac L.M."/>
            <person name="Madupu R."/>
            <person name="Kolonay J.F."/>
            <person name="Durkin S.A."/>
            <person name="Daugherty S.C."/>
            <person name="Shetty J."/>
            <person name="Shvartsbeyn A."/>
            <person name="Gebregeorgis E."/>
            <person name="Geer K."/>
            <person name="Tsegaye G."/>
            <person name="Malek J.A."/>
            <person name="Ayodeji B."/>
            <person name="Shatsman S."/>
            <person name="McLeod M.P."/>
            <person name="Smajs D."/>
            <person name="Howell J.K."/>
            <person name="Pal S."/>
            <person name="Amin A."/>
            <person name="Vashisth P."/>
            <person name="McNeill T.Z."/>
            <person name="Xiang Q."/>
            <person name="Sodergren E."/>
            <person name="Baca E."/>
            <person name="Weinstock G.M."/>
            <person name="Norris S.J."/>
            <person name="Fraser C.M."/>
            <person name="Paulsen I.T."/>
        </authorList>
    </citation>
    <scope>NUCLEOTIDE SEQUENCE [LARGE SCALE GENOMIC DNA]</scope>
    <source>
        <strain>ATCC 35405 / DSM 14222 / CIP 103919 / JCM 8153 / KCTC 15104</strain>
    </source>
</reference>
<comment type="catalytic activity">
    <reaction evidence="1">
        <text>beta-D-fructose 1,6-bisphosphate = D-glyceraldehyde 3-phosphate + dihydroxyacetone phosphate</text>
        <dbReference type="Rhea" id="RHEA:14729"/>
        <dbReference type="ChEBI" id="CHEBI:32966"/>
        <dbReference type="ChEBI" id="CHEBI:57642"/>
        <dbReference type="ChEBI" id="CHEBI:59776"/>
        <dbReference type="EC" id="4.1.2.13"/>
    </reaction>
</comment>
<comment type="pathway">
    <text evidence="1">Carbohydrate degradation; glycolysis; D-glyceraldehyde 3-phosphate and glycerone phosphate from D-glucose: step 4/4.</text>
</comment>
<comment type="similarity">
    <text evidence="1">Belongs to the class I fructose-bisphosphate aldolase family.</text>
</comment>
<name>ALF1_TREDE</name>
<proteinExistence type="inferred from homology"/>
<evidence type="ECO:0000255" key="1">
    <source>
        <dbReference type="HAMAP-Rule" id="MF_00729"/>
    </source>
</evidence>
<protein>
    <recommendedName>
        <fullName evidence="1">Fructose-bisphosphate aldolase class 1</fullName>
        <ecNumber evidence="1">4.1.2.13</ecNumber>
    </recommendedName>
    <alternativeName>
        <fullName>Fructose-bisphosphate aldolase class I</fullName>
        <shortName evidence="1">FBP aldolase</shortName>
    </alternativeName>
</protein>